<name>RS12_RUEPO</name>
<protein>
    <recommendedName>
        <fullName evidence="2">Small ribosomal subunit protein uS12</fullName>
    </recommendedName>
    <alternativeName>
        <fullName evidence="4">30S ribosomal protein S12</fullName>
    </alternativeName>
</protein>
<sequence>MPTIQQLIRKPRQPKVKRSKSQHLEQCPQKRGVCTRVYTTTPKKPNSAMRKVAKVRLTNGYEVISYIPGESHNLQEHSVVLIRGGRVKDLPGVRYHILRGVLDTQGVKDRKQRRSKYGAKRPK</sequence>
<comment type="function">
    <text evidence="2">With S4 and S5 plays an important role in translational accuracy.</text>
</comment>
<comment type="function">
    <text evidence="2">Interacts with and stabilizes bases of the 16S rRNA that are involved in tRNA selection in the A site and with the mRNA backbone. Located at the interface of the 30S and 50S subunits, it traverses the body of the 30S subunit contacting proteins on the other side and probably holding the rRNA structure together. The combined cluster of proteins S8, S12 and S17 appears to hold together the shoulder and platform of the 30S subunit.</text>
</comment>
<comment type="subunit">
    <text evidence="2">Part of the 30S ribosomal subunit. Contacts proteins S8 and S17. May interact with IF1 in the 30S initiation complex.</text>
</comment>
<comment type="similarity">
    <text evidence="2">Belongs to the universal ribosomal protein uS12 family.</text>
</comment>
<proteinExistence type="inferred from homology"/>
<feature type="chain" id="PRO_0000146306" description="Small ribosomal subunit protein uS12">
    <location>
        <begin position="1"/>
        <end position="123"/>
    </location>
</feature>
<feature type="region of interest" description="Disordered" evidence="3">
    <location>
        <begin position="1"/>
        <end position="28"/>
    </location>
</feature>
<feature type="compositionally biased region" description="Basic residues" evidence="3">
    <location>
        <begin position="9"/>
        <end position="21"/>
    </location>
</feature>
<feature type="modified residue" description="3-methylthioaspartic acid" evidence="1">
    <location>
        <position position="89"/>
    </location>
</feature>
<reference key="1">
    <citation type="journal article" date="2004" name="Nature">
        <title>Genome sequence of Silicibacter pomeroyi reveals adaptations to the marine environment.</title>
        <authorList>
            <person name="Moran M.A."/>
            <person name="Buchan A."/>
            <person name="Gonzalez J.M."/>
            <person name="Heidelberg J.F."/>
            <person name="Whitman W.B."/>
            <person name="Kiene R.P."/>
            <person name="Henriksen J.R."/>
            <person name="King G.M."/>
            <person name="Belas R."/>
            <person name="Fuqua C."/>
            <person name="Brinkac L.M."/>
            <person name="Lewis M."/>
            <person name="Johri S."/>
            <person name="Weaver B."/>
            <person name="Pai G."/>
            <person name="Eisen J.A."/>
            <person name="Rahe E."/>
            <person name="Sheldon W.M."/>
            <person name="Ye W."/>
            <person name="Miller T.R."/>
            <person name="Carlton J."/>
            <person name="Rasko D.A."/>
            <person name="Paulsen I.T."/>
            <person name="Ren Q."/>
            <person name="Daugherty S.C."/>
            <person name="DeBoy R.T."/>
            <person name="Dodson R.J."/>
            <person name="Durkin A.S."/>
            <person name="Madupu R."/>
            <person name="Nelson W.C."/>
            <person name="Sullivan S.A."/>
            <person name="Rosovitz M.J."/>
            <person name="Haft D.H."/>
            <person name="Selengut J."/>
            <person name="Ward N."/>
        </authorList>
    </citation>
    <scope>NUCLEOTIDE SEQUENCE [LARGE SCALE GENOMIC DNA]</scope>
    <source>
        <strain>ATCC 700808 / DSM 15171 / DSS-3</strain>
    </source>
</reference>
<reference key="2">
    <citation type="journal article" date="2014" name="Stand. Genomic Sci.">
        <title>An updated genome annotation for the model marine bacterium Ruegeria pomeroyi DSS-3.</title>
        <authorList>
            <person name="Rivers A.R."/>
            <person name="Smith C.B."/>
            <person name="Moran M.A."/>
        </authorList>
    </citation>
    <scope>GENOME REANNOTATION</scope>
    <source>
        <strain>ATCC 700808 / DSM 15171 / DSS-3</strain>
    </source>
</reference>
<keyword id="KW-0488">Methylation</keyword>
<keyword id="KW-1185">Reference proteome</keyword>
<keyword id="KW-0687">Ribonucleoprotein</keyword>
<keyword id="KW-0689">Ribosomal protein</keyword>
<keyword id="KW-0694">RNA-binding</keyword>
<keyword id="KW-0699">rRNA-binding</keyword>
<keyword id="KW-0820">tRNA-binding</keyword>
<accession>Q5LMR2</accession>
<dbReference type="EMBL" id="CP000031">
    <property type="protein sequence ID" value="AAV96726.1"/>
    <property type="molecule type" value="Genomic_DNA"/>
</dbReference>
<dbReference type="RefSeq" id="WP_005862801.1">
    <property type="nucleotide sequence ID" value="NC_003911.12"/>
</dbReference>
<dbReference type="SMR" id="Q5LMR2"/>
<dbReference type="STRING" id="246200.SPO3501"/>
<dbReference type="PaxDb" id="246200-SPO3501"/>
<dbReference type="GeneID" id="80821129"/>
<dbReference type="KEGG" id="sil:SPO3501"/>
<dbReference type="eggNOG" id="COG0048">
    <property type="taxonomic scope" value="Bacteria"/>
</dbReference>
<dbReference type="HOGENOM" id="CLU_104295_1_2_5"/>
<dbReference type="OrthoDB" id="9802366at2"/>
<dbReference type="Proteomes" id="UP000001023">
    <property type="component" value="Chromosome"/>
</dbReference>
<dbReference type="GO" id="GO:0015935">
    <property type="term" value="C:small ribosomal subunit"/>
    <property type="evidence" value="ECO:0007669"/>
    <property type="project" value="InterPro"/>
</dbReference>
<dbReference type="GO" id="GO:0019843">
    <property type="term" value="F:rRNA binding"/>
    <property type="evidence" value="ECO:0007669"/>
    <property type="project" value="UniProtKB-UniRule"/>
</dbReference>
<dbReference type="GO" id="GO:0003735">
    <property type="term" value="F:structural constituent of ribosome"/>
    <property type="evidence" value="ECO:0007669"/>
    <property type="project" value="InterPro"/>
</dbReference>
<dbReference type="GO" id="GO:0000049">
    <property type="term" value="F:tRNA binding"/>
    <property type="evidence" value="ECO:0007669"/>
    <property type="project" value="UniProtKB-UniRule"/>
</dbReference>
<dbReference type="GO" id="GO:0006412">
    <property type="term" value="P:translation"/>
    <property type="evidence" value="ECO:0007669"/>
    <property type="project" value="UniProtKB-UniRule"/>
</dbReference>
<dbReference type="CDD" id="cd03368">
    <property type="entry name" value="Ribosomal_S12"/>
    <property type="match status" value="1"/>
</dbReference>
<dbReference type="FunFam" id="2.40.50.140:FF:000001">
    <property type="entry name" value="30S ribosomal protein S12"/>
    <property type="match status" value="1"/>
</dbReference>
<dbReference type="Gene3D" id="2.40.50.140">
    <property type="entry name" value="Nucleic acid-binding proteins"/>
    <property type="match status" value="1"/>
</dbReference>
<dbReference type="HAMAP" id="MF_00403_B">
    <property type="entry name" value="Ribosomal_uS12_B"/>
    <property type="match status" value="1"/>
</dbReference>
<dbReference type="InterPro" id="IPR012340">
    <property type="entry name" value="NA-bd_OB-fold"/>
</dbReference>
<dbReference type="InterPro" id="IPR006032">
    <property type="entry name" value="Ribosomal_uS12"/>
</dbReference>
<dbReference type="InterPro" id="IPR005679">
    <property type="entry name" value="Ribosomal_uS12_bac"/>
</dbReference>
<dbReference type="NCBIfam" id="TIGR00981">
    <property type="entry name" value="rpsL_bact"/>
    <property type="match status" value="1"/>
</dbReference>
<dbReference type="PANTHER" id="PTHR11652">
    <property type="entry name" value="30S RIBOSOMAL PROTEIN S12 FAMILY MEMBER"/>
    <property type="match status" value="1"/>
</dbReference>
<dbReference type="Pfam" id="PF00164">
    <property type="entry name" value="Ribosom_S12_S23"/>
    <property type="match status" value="1"/>
</dbReference>
<dbReference type="PIRSF" id="PIRSF002133">
    <property type="entry name" value="Ribosomal_S12/S23"/>
    <property type="match status" value="1"/>
</dbReference>
<dbReference type="PRINTS" id="PR01034">
    <property type="entry name" value="RIBOSOMALS12"/>
</dbReference>
<dbReference type="SUPFAM" id="SSF50249">
    <property type="entry name" value="Nucleic acid-binding proteins"/>
    <property type="match status" value="1"/>
</dbReference>
<dbReference type="PROSITE" id="PS00055">
    <property type="entry name" value="RIBOSOMAL_S12"/>
    <property type="match status" value="1"/>
</dbReference>
<evidence type="ECO:0000250" key="1"/>
<evidence type="ECO:0000255" key="2">
    <source>
        <dbReference type="HAMAP-Rule" id="MF_00403"/>
    </source>
</evidence>
<evidence type="ECO:0000256" key="3">
    <source>
        <dbReference type="SAM" id="MobiDB-lite"/>
    </source>
</evidence>
<evidence type="ECO:0000305" key="4"/>
<gene>
    <name evidence="2" type="primary">rpsL</name>
    <name type="ordered locus">SPO3501</name>
</gene>
<organism>
    <name type="scientific">Ruegeria pomeroyi (strain ATCC 700808 / DSM 15171 / DSS-3)</name>
    <name type="common">Silicibacter pomeroyi</name>
    <dbReference type="NCBI Taxonomy" id="246200"/>
    <lineage>
        <taxon>Bacteria</taxon>
        <taxon>Pseudomonadati</taxon>
        <taxon>Pseudomonadota</taxon>
        <taxon>Alphaproteobacteria</taxon>
        <taxon>Rhodobacterales</taxon>
        <taxon>Roseobacteraceae</taxon>
        <taxon>Ruegeria</taxon>
    </lineage>
</organism>